<sequence length="158" mass="17614">MRLKNRLFWIAAFIAFFLDQITKYWVVQTFSLGQTLPLLTGIFHFTYVTNTGAAFSLLSGKVEWLRWLSLGVSLVLIALALFGPTLNLWDQLGYGLILGGAMGNGIDRFVLGHVVDFLDFRLISFPVFNVADSFISIGIVFLLIASFQKTPTSTGRLD</sequence>
<keyword id="KW-0064">Aspartyl protease</keyword>
<keyword id="KW-0997">Cell inner membrane</keyword>
<keyword id="KW-1003">Cell membrane</keyword>
<keyword id="KW-0378">Hydrolase</keyword>
<keyword id="KW-0472">Membrane</keyword>
<keyword id="KW-0645">Protease</keyword>
<keyword id="KW-1185">Reference proteome</keyword>
<keyword id="KW-0812">Transmembrane</keyword>
<keyword id="KW-1133">Transmembrane helix</keyword>
<proteinExistence type="inferred from homology"/>
<dbReference type="EC" id="3.4.23.36" evidence="1"/>
<dbReference type="EMBL" id="CP001037">
    <property type="protein sequence ID" value="ACC79626.1"/>
    <property type="molecule type" value="Genomic_DNA"/>
</dbReference>
<dbReference type="RefSeq" id="WP_012407648.1">
    <property type="nucleotide sequence ID" value="NC_010628.1"/>
</dbReference>
<dbReference type="SMR" id="B2IU55"/>
<dbReference type="STRING" id="63737.Npun_R0889"/>
<dbReference type="EnsemblBacteria" id="ACC79626">
    <property type="protein sequence ID" value="ACC79626"/>
    <property type="gene ID" value="Npun_R0889"/>
</dbReference>
<dbReference type="KEGG" id="npu:Npun_R0889"/>
<dbReference type="eggNOG" id="COG0597">
    <property type="taxonomic scope" value="Bacteria"/>
</dbReference>
<dbReference type="HOGENOM" id="CLU_083252_3_2_3"/>
<dbReference type="OrthoDB" id="9810259at2"/>
<dbReference type="PhylomeDB" id="B2IU55"/>
<dbReference type="UniPathway" id="UPA00665"/>
<dbReference type="Proteomes" id="UP000001191">
    <property type="component" value="Chromosome"/>
</dbReference>
<dbReference type="GO" id="GO:0005886">
    <property type="term" value="C:plasma membrane"/>
    <property type="evidence" value="ECO:0007669"/>
    <property type="project" value="UniProtKB-SubCell"/>
</dbReference>
<dbReference type="GO" id="GO:0004190">
    <property type="term" value="F:aspartic-type endopeptidase activity"/>
    <property type="evidence" value="ECO:0007669"/>
    <property type="project" value="UniProtKB-UniRule"/>
</dbReference>
<dbReference type="GO" id="GO:0006508">
    <property type="term" value="P:proteolysis"/>
    <property type="evidence" value="ECO:0007669"/>
    <property type="project" value="UniProtKB-KW"/>
</dbReference>
<dbReference type="HAMAP" id="MF_00161">
    <property type="entry name" value="LspA"/>
    <property type="match status" value="1"/>
</dbReference>
<dbReference type="InterPro" id="IPR001872">
    <property type="entry name" value="Peptidase_A8"/>
</dbReference>
<dbReference type="NCBIfam" id="TIGR00077">
    <property type="entry name" value="lspA"/>
    <property type="match status" value="1"/>
</dbReference>
<dbReference type="PANTHER" id="PTHR33695">
    <property type="entry name" value="LIPOPROTEIN SIGNAL PEPTIDASE"/>
    <property type="match status" value="1"/>
</dbReference>
<dbReference type="PANTHER" id="PTHR33695:SF1">
    <property type="entry name" value="LIPOPROTEIN SIGNAL PEPTIDASE"/>
    <property type="match status" value="1"/>
</dbReference>
<dbReference type="Pfam" id="PF01252">
    <property type="entry name" value="Peptidase_A8"/>
    <property type="match status" value="1"/>
</dbReference>
<dbReference type="PRINTS" id="PR00781">
    <property type="entry name" value="LIPOSIGPTASE"/>
</dbReference>
<dbReference type="PROSITE" id="PS00855">
    <property type="entry name" value="SPASE_II"/>
    <property type="match status" value="1"/>
</dbReference>
<evidence type="ECO:0000255" key="1">
    <source>
        <dbReference type="HAMAP-Rule" id="MF_00161"/>
    </source>
</evidence>
<name>LSPA_NOSP7</name>
<organism>
    <name type="scientific">Nostoc punctiforme (strain ATCC 29133 / PCC 73102)</name>
    <dbReference type="NCBI Taxonomy" id="63737"/>
    <lineage>
        <taxon>Bacteria</taxon>
        <taxon>Bacillati</taxon>
        <taxon>Cyanobacteriota</taxon>
        <taxon>Cyanophyceae</taxon>
        <taxon>Nostocales</taxon>
        <taxon>Nostocaceae</taxon>
        <taxon>Nostoc</taxon>
    </lineage>
</organism>
<protein>
    <recommendedName>
        <fullName evidence="1">Lipoprotein signal peptidase</fullName>
        <ecNumber evidence="1">3.4.23.36</ecNumber>
    </recommendedName>
    <alternativeName>
        <fullName evidence="1">Prolipoprotein signal peptidase</fullName>
    </alternativeName>
    <alternativeName>
        <fullName evidence="1">Signal peptidase II</fullName>
        <shortName evidence="1">SPase II</shortName>
    </alternativeName>
</protein>
<feature type="chain" id="PRO_1000097267" description="Lipoprotein signal peptidase">
    <location>
        <begin position="1"/>
        <end position="158"/>
    </location>
</feature>
<feature type="transmembrane region" description="Helical" evidence="1">
    <location>
        <begin position="7"/>
        <end position="27"/>
    </location>
</feature>
<feature type="transmembrane region" description="Helical" evidence="1">
    <location>
        <begin position="38"/>
        <end position="58"/>
    </location>
</feature>
<feature type="transmembrane region" description="Helical" evidence="1">
    <location>
        <begin position="68"/>
        <end position="88"/>
    </location>
</feature>
<feature type="transmembrane region" description="Helical" evidence="1">
    <location>
        <begin position="92"/>
        <end position="112"/>
    </location>
</feature>
<feature type="transmembrane region" description="Helical" evidence="1">
    <location>
        <begin position="125"/>
        <end position="145"/>
    </location>
</feature>
<feature type="active site" evidence="1">
    <location>
        <position position="116"/>
    </location>
</feature>
<feature type="active site" evidence="1">
    <location>
        <position position="132"/>
    </location>
</feature>
<accession>B2IU55</accession>
<reference key="1">
    <citation type="journal article" date="2013" name="Plant Physiol.">
        <title>A Nostoc punctiforme Sugar Transporter Necessary to Establish a Cyanobacterium-Plant Symbiosis.</title>
        <authorList>
            <person name="Ekman M."/>
            <person name="Picossi S."/>
            <person name="Campbell E.L."/>
            <person name="Meeks J.C."/>
            <person name="Flores E."/>
        </authorList>
    </citation>
    <scope>NUCLEOTIDE SEQUENCE [LARGE SCALE GENOMIC DNA]</scope>
    <source>
        <strain>ATCC 29133 / PCC 73102</strain>
    </source>
</reference>
<gene>
    <name evidence="1" type="primary">lspA</name>
    <name type="ordered locus">Npun_R0889</name>
</gene>
<comment type="function">
    <text evidence="1">This protein specifically catalyzes the removal of signal peptides from prolipoproteins.</text>
</comment>
<comment type="catalytic activity">
    <reaction evidence="1">
        <text>Release of signal peptides from bacterial membrane prolipoproteins. Hydrolyzes -Xaa-Yaa-Zaa-|-(S,diacylglyceryl)Cys-, in which Xaa is hydrophobic (preferably Leu), and Yaa (Ala or Ser) and Zaa (Gly or Ala) have small, neutral side chains.</text>
        <dbReference type="EC" id="3.4.23.36"/>
    </reaction>
</comment>
<comment type="pathway">
    <text evidence="1">Protein modification; lipoprotein biosynthesis (signal peptide cleavage).</text>
</comment>
<comment type="subcellular location">
    <subcellularLocation>
        <location evidence="1">Cell inner membrane</location>
        <topology evidence="1">Multi-pass membrane protein</topology>
    </subcellularLocation>
</comment>
<comment type="similarity">
    <text evidence="1">Belongs to the peptidase A8 family.</text>
</comment>